<name>1A1D_THEMA</name>
<organism>
    <name type="scientific">Thermotoga maritima (strain ATCC 43589 / DSM 3109 / JCM 10099 / NBRC 100826 / MSB8)</name>
    <dbReference type="NCBI Taxonomy" id="243274"/>
    <lineage>
        <taxon>Bacteria</taxon>
        <taxon>Thermotogati</taxon>
        <taxon>Thermotogota</taxon>
        <taxon>Thermotogae</taxon>
        <taxon>Thermotogales</taxon>
        <taxon>Thermotogaceae</taxon>
        <taxon>Thermotoga</taxon>
    </lineage>
</organism>
<gene>
    <name type="ordered locus">TM_0225</name>
</gene>
<dbReference type="EC" id="3.5.99.7"/>
<dbReference type="EMBL" id="AE000512">
    <property type="protein sequence ID" value="AAD35317.1"/>
    <property type="molecule type" value="Genomic_DNA"/>
</dbReference>
<dbReference type="PIR" id="D72401">
    <property type="entry name" value="D72401"/>
</dbReference>
<dbReference type="RefSeq" id="NP_228040.1">
    <property type="nucleotide sequence ID" value="NC_000853.1"/>
</dbReference>
<dbReference type="RefSeq" id="WP_004082912.1">
    <property type="nucleotide sequence ID" value="NC_000853.1"/>
</dbReference>
<dbReference type="SMR" id="Q9WY68"/>
<dbReference type="STRING" id="243274.TM_0225"/>
<dbReference type="PaxDb" id="243274-THEMA_03600"/>
<dbReference type="EnsemblBacteria" id="AAD35317">
    <property type="protein sequence ID" value="AAD35317"/>
    <property type="gene ID" value="TM_0225"/>
</dbReference>
<dbReference type="KEGG" id="tma:TM0225"/>
<dbReference type="KEGG" id="tmi:THEMA_03600"/>
<dbReference type="KEGG" id="tmm:Tmari_0223"/>
<dbReference type="KEGG" id="tmw:THMA_0232"/>
<dbReference type="eggNOG" id="COG2515">
    <property type="taxonomic scope" value="Bacteria"/>
</dbReference>
<dbReference type="InParanoid" id="Q9WY68"/>
<dbReference type="OrthoDB" id="9801249at2"/>
<dbReference type="Proteomes" id="UP000008183">
    <property type="component" value="Chromosome"/>
</dbReference>
<dbReference type="GO" id="GO:0008660">
    <property type="term" value="F:1-aminocyclopropane-1-carboxylate deaminase activity"/>
    <property type="evidence" value="ECO:0007669"/>
    <property type="project" value="UniProtKB-EC"/>
</dbReference>
<dbReference type="GO" id="GO:0019148">
    <property type="term" value="F:D-cysteine desulfhydrase activity"/>
    <property type="evidence" value="ECO:0000318"/>
    <property type="project" value="GO_Central"/>
</dbReference>
<dbReference type="CDD" id="cd06449">
    <property type="entry name" value="ACCD"/>
    <property type="match status" value="1"/>
</dbReference>
<dbReference type="Gene3D" id="3.40.50.1100">
    <property type="match status" value="2"/>
</dbReference>
<dbReference type="InterPro" id="IPR027278">
    <property type="entry name" value="ACCD_DCysDesulf"/>
</dbReference>
<dbReference type="InterPro" id="IPR005966">
    <property type="entry name" value="D-Cys_desShydrase"/>
</dbReference>
<dbReference type="InterPro" id="IPR001926">
    <property type="entry name" value="TrpB-like_PALP"/>
</dbReference>
<dbReference type="InterPro" id="IPR036052">
    <property type="entry name" value="TrpB-like_PALP_sf"/>
</dbReference>
<dbReference type="NCBIfam" id="TIGR01275">
    <property type="entry name" value="ACC_deam_rel"/>
    <property type="match status" value="1"/>
</dbReference>
<dbReference type="PANTHER" id="PTHR43780">
    <property type="entry name" value="1-AMINOCYCLOPROPANE-1-CARBOXYLATE DEAMINASE-RELATED"/>
    <property type="match status" value="1"/>
</dbReference>
<dbReference type="PANTHER" id="PTHR43780:SF2">
    <property type="entry name" value="1-AMINOCYCLOPROPANE-1-CARBOXYLATE DEAMINASE-RELATED"/>
    <property type="match status" value="1"/>
</dbReference>
<dbReference type="Pfam" id="PF00291">
    <property type="entry name" value="PALP"/>
    <property type="match status" value="1"/>
</dbReference>
<dbReference type="PIRSF" id="PIRSF006278">
    <property type="entry name" value="ACCD_DCysDesulf"/>
    <property type="match status" value="1"/>
</dbReference>
<dbReference type="SUPFAM" id="SSF53686">
    <property type="entry name" value="Tryptophan synthase beta subunit-like PLP-dependent enzymes"/>
    <property type="match status" value="1"/>
</dbReference>
<feature type="chain" id="PRO_0000184520" description="Putative 1-aminocyclopropane-1-carboxylate deaminase">
    <location>
        <begin position="1"/>
        <end position="312"/>
    </location>
</feature>
<feature type="modified residue" description="N6-(pyridoxal phosphate)lysine" evidence="1">
    <location>
        <position position="42"/>
    </location>
</feature>
<evidence type="ECO:0000250" key="1"/>
<evidence type="ECO:0000305" key="2"/>
<comment type="catalytic activity">
    <reaction>
        <text>1-aminocyclopropane-1-carboxylate + H2O = 2-oxobutanoate + NH4(+)</text>
        <dbReference type="Rhea" id="RHEA:16933"/>
        <dbReference type="ChEBI" id="CHEBI:15377"/>
        <dbReference type="ChEBI" id="CHEBI:16763"/>
        <dbReference type="ChEBI" id="CHEBI:28938"/>
        <dbReference type="ChEBI" id="CHEBI:58360"/>
        <dbReference type="EC" id="3.5.99.7"/>
    </reaction>
</comment>
<comment type="cofactor">
    <cofactor evidence="1">
        <name>pyridoxal 5'-phosphate</name>
        <dbReference type="ChEBI" id="CHEBI:597326"/>
    </cofactor>
</comment>
<comment type="similarity">
    <text evidence="2">Belongs to the ACC deaminase/D-cysteine desulfhydrase family.</text>
</comment>
<sequence>MRIDLSLKPTPVQFLKRLSEKYGFNIYVKRDDLTELVGSGNKIRKLEYLLWEALKKGATTVFTCGGLQSNHARATAYVSRRYGLKPVLFLRKGEKVLNGNLLLDILLGAEIVEVSPEEYERIDEIFDVHKKMREKKGEKVYVIPEGGSNSLGAFGYFNAVLEMKDQLNLESFDAIVCAVGSGGTIAGLSAGISFLEYHVPVVGVNVTTKNSDYFVGKVKRIISGMEEYGLRVNETVFEVVDDYRGPGYAIPSSEDVEILKEVASIEGIILDPVYTAKAFRGMIEMFRNSEKNVLFIHTGGIFGLFAQSRRLV</sequence>
<protein>
    <recommendedName>
        <fullName>Putative 1-aminocyclopropane-1-carboxylate deaminase</fullName>
        <shortName>ACC deaminase</shortName>
        <ecNumber>3.5.99.7</ecNumber>
    </recommendedName>
</protein>
<accession>Q9WY68</accession>
<proteinExistence type="inferred from homology"/>
<reference key="1">
    <citation type="journal article" date="1999" name="Nature">
        <title>Evidence for lateral gene transfer between Archaea and Bacteria from genome sequence of Thermotoga maritima.</title>
        <authorList>
            <person name="Nelson K.E."/>
            <person name="Clayton R.A."/>
            <person name="Gill S.R."/>
            <person name="Gwinn M.L."/>
            <person name="Dodson R.J."/>
            <person name="Haft D.H."/>
            <person name="Hickey E.K."/>
            <person name="Peterson J.D."/>
            <person name="Nelson W.C."/>
            <person name="Ketchum K.A."/>
            <person name="McDonald L.A."/>
            <person name="Utterback T.R."/>
            <person name="Malek J.A."/>
            <person name="Linher K.D."/>
            <person name="Garrett M.M."/>
            <person name="Stewart A.M."/>
            <person name="Cotton M.D."/>
            <person name="Pratt M.S."/>
            <person name="Phillips C.A."/>
            <person name="Richardson D.L."/>
            <person name="Heidelberg J.F."/>
            <person name="Sutton G.G."/>
            <person name="Fleischmann R.D."/>
            <person name="Eisen J.A."/>
            <person name="White O."/>
            <person name="Salzberg S.L."/>
            <person name="Smith H.O."/>
            <person name="Venter J.C."/>
            <person name="Fraser C.M."/>
        </authorList>
    </citation>
    <scope>NUCLEOTIDE SEQUENCE [LARGE SCALE GENOMIC DNA]</scope>
    <source>
        <strain>ATCC 43589 / DSM 3109 / JCM 10099 / NBRC 100826 / MSB8</strain>
    </source>
</reference>
<keyword id="KW-0378">Hydrolase</keyword>
<keyword id="KW-0663">Pyridoxal phosphate</keyword>
<keyword id="KW-1185">Reference proteome</keyword>